<accession>A1UZ32</accession>
<organism>
    <name type="scientific">Burkholderia mallei (strain SAVP1)</name>
    <dbReference type="NCBI Taxonomy" id="320388"/>
    <lineage>
        <taxon>Bacteria</taxon>
        <taxon>Pseudomonadati</taxon>
        <taxon>Pseudomonadota</taxon>
        <taxon>Betaproteobacteria</taxon>
        <taxon>Burkholderiales</taxon>
        <taxon>Burkholderiaceae</taxon>
        <taxon>Burkholderia</taxon>
        <taxon>pseudomallei group</taxon>
    </lineage>
</organism>
<protein>
    <recommendedName>
        <fullName evidence="1">3-isopropylmalate dehydratase large subunit</fullName>
        <ecNumber evidence="1">4.2.1.33</ecNumber>
    </recommendedName>
    <alternativeName>
        <fullName evidence="1">Alpha-IPM isomerase</fullName>
        <shortName evidence="1">IPMI</shortName>
    </alternativeName>
    <alternativeName>
        <fullName evidence="1">Isopropylmalate isomerase</fullName>
    </alternativeName>
</protein>
<dbReference type="EC" id="4.2.1.33" evidence="1"/>
<dbReference type="EMBL" id="CP000525">
    <property type="protein sequence ID" value="ABM48510.1"/>
    <property type="molecule type" value="Genomic_DNA"/>
</dbReference>
<dbReference type="RefSeq" id="WP_004187091.1">
    <property type="nucleotide sequence ID" value="NC_008784.1"/>
</dbReference>
<dbReference type="SMR" id="A1UZ32"/>
<dbReference type="GeneID" id="92977643"/>
<dbReference type="KEGG" id="bmv:BMASAVP1_1641"/>
<dbReference type="HOGENOM" id="CLU_006714_3_4_4"/>
<dbReference type="UniPathway" id="UPA00048">
    <property type="reaction ID" value="UER00071"/>
</dbReference>
<dbReference type="GO" id="GO:0003861">
    <property type="term" value="F:3-isopropylmalate dehydratase activity"/>
    <property type="evidence" value="ECO:0007669"/>
    <property type="project" value="UniProtKB-UniRule"/>
</dbReference>
<dbReference type="GO" id="GO:0051539">
    <property type="term" value="F:4 iron, 4 sulfur cluster binding"/>
    <property type="evidence" value="ECO:0007669"/>
    <property type="project" value="UniProtKB-KW"/>
</dbReference>
<dbReference type="GO" id="GO:0046872">
    <property type="term" value="F:metal ion binding"/>
    <property type="evidence" value="ECO:0007669"/>
    <property type="project" value="UniProtKB-KW"/>
</dbReference>
<dbReference type="GO" id="GO:0009098">
    <property type="term" value="P:L-leucine biosynthetic process"/>
    <property type="evidence" value="ECO:0007669"/>
    <property type="project" value="UniProtKB-UniRule"/>
</dbReference>
<dbReference type="CDD" id="cd01583">
    <property type="entry name" value="IPMI"/>
    <property type="match status" value="1"/>
</dbReference>
<dbReference type="FunFam" id="3.30.499.10:FF:000007">
    <property type="entry name" value="3-isopropylmalate dehydratase large subunit"/>
    <property type="match status" value="1"/>
</dbReference>
<dbReference type="Gene3D" id="3.30.499.10">
    <property type="entry name" value="Aconitase, domain 3"/>
    <property type="match status" value="2"/>
</dbReference>
<dbReference type="HAMAP" id="MF_01026">
    <property type="entry name" value="LeuC_type1"/>
    <property type="match status" value="1"/>
</dbReference>
<dbReference type="InterPro" id="IPR004430">
    <property type="entry name" value="3-IsopropMal_deHydase_lsu"/>
</dbReference>
<dbReference type="InterPro" id="IPR015931">
    <property type="entry name" value="Acnase/IPM_dHydase_lsu_aba_1/3"/>
</dbReference>
<dbReference type="InterPro" id="IPR001030">
    <property type="entry name" value="Acoase/IPM_deHydtase_lsu_aba"/>
</dbReference>
<dbReference type="InterPro" id="IPR018136">
    <property type="entry name" value="Aconitase_4Fe-4S_BS"/>
</dbReference>
<dbReference type="InterPro" id="IPR036008">
    <property type="entry name" value="Aconitase_4Fe-4S_dom"/>
</dbReference>
<dbReference type="InterPro" id="IPR050067">
    <property type="entry name" value="IPM_dehydratase_rel_enz"/>
</dbReference>
<dbReference type="InterPro" id="IPR033941">
    <property type="entry name" value="IPMI_cat"/>
</dbReference>
<dbReference type="NCBIfam" id="TIGR00170">
    <property type="entry name" value="leuC"/>
    <property type="match status" value="1"/>
</dbReference>
<dbReference type="NCBIfam" id="NF004016">
    <property type="entry name" value="PRK05478.1"/>
    <property type="match status" value="1"/>
</dbReference>
<dbReference type="NCBIfam" id="NF009116">
    <property type="entry name" value="PRK12466.1"/>
    <property type="match status" value="1"/>
</dbReference>
<dbReference type="PANTHER" id="PTHR43822:SF9">
    <property type="entry name" value="3-ISOPROPYLMALATE DEHYDRATASE"/>
    <property type="match status" value="1"/>
</dbReference>
<dbReference type="PANTHER" id="PTHR43822">
    <property type="entry name" value="HOMOACONITASE, MITOCHONDRIAL-RELATED"/>
    <property type="match status" value="1"/>
</dbReference>
<dbReference type="Pfam" id="PF00330">
    <property type="entry name" value="Aconitase"/>
    <property type="match status" value="1"/>
</dbReference>
<dbReference type="PRINTS" id="PR00415">
    <property type="entry name" value="ACONITASE"/>
</dbReference>
<dbReference type="SUPFAM" id="SSF53732">
    <property type="entry name" value="Aconitase iron-sulfur domain"/>
    <property type="match status" value="1"/>
</dbReference>
<dbReference type="PROSITE" id="PS00450">
    <property type="entry name" value="ACONITASE_1"/>
    <property type="match status" value="1"/>
</dbReference>
<dbReference type="PROSITE" id="PS01244">
    <property type="entry name" value="ACONITASE_2"/>
    <property type="match status" value="1"/>
</dbReference>
<sequence>MAQTLYDKLWNSHVVHTEEDGTALLYIDRQLLHEVTSPQAFEGLKLAQRPVWRISANLAVSDHNVPTTDRSHGIADPVSKLQVDTLDANCDAYGITQFKMNDVRQGIVHIIGPEQGATLPGMTIVCGDSHTSTHGAFGALAHGIGTSEVEHVLATQTLLQKKSKNMLVKVEGQLPRGCTAKDIVLAIIGQIGTAGGTGYAIEFGGSTIRALTMEGRMTVCNMAIEAGARAGMVAVDDTTVEYLKGRPFVPTGAEWDQAVEYWKTFRSDEGAQFDRVVELDAAQIVPQVTWGTSPEMVTSIDGRVPDPEREKDPVKRDAMERALAYMALAPNTPIEAIKVDKIFIGSCTNARIEDIRAAAYVVKKLNRRVAPNVRLAMVVPGSGLVKAQAEREGLDKVFTEAGFEWREPGCSMCLAMNADRLEPGERCASTSNRNFEGRQGQGGRTHLVSPAMAAAAAIEGHFVDIRRLG</sequence>
<name>LEUC_BURMS</name>
<feature type="chain" id="PRO_1000063538" description="3-isopropylmalate dehydratase large subunit">
    <location>
        <begin position="1"/>
        <end position="469"/>
    </location>
</feature>
<feature type="binding site" evidence="1">
    <location>
        <position position="347"/>
    </location>
    <ligand>
        <name>[4Fe-4S] cluster</name>
        <dbReference type="ChEBI" id="CHEBI:49883"/>
    </ligand>
</feature>
<feature type="binding site" evidence="1">
    <location>
        <position position="410"/>
    </location>
    <ligand>
        <name>[4Fe-4S] cluster</name>
        <dbReference type="ChEBI" id="CHEBI:49883"/>
    </ligand>
</feature>
<feature type="binding site" evidence="1">
    <location>
        <position position="413"/>
    </location>
    <ligand>
        <name>[4Fe-4S] cluster</name>
        <dbReference type="ChEBI" id="CHEBI:49883"/>
    </ligand>
</feature>
<proteinExistence type="inferred from homology"/>
<reference key="1">
    <citation type="journal article" date="2010" name="Genome Biol. Evol.">
        <title>Continuing evolution of Burkholderia mallei through genome reduction and large-scale rearrangements.</title>
        <authorList>
            <person name="Losada L."/>
            <person name="Ronning C.M."/>
            <person name="DeShazer D."/>
            <person name="Woods D."/>
            <person name="Fedorova N."/>
            <person name="Kim H.S."/>
            <person name="Shabalina S.A."/>
            <person name="Pearson T.R."/>
            <person name="Brinkac L."/>
            <person name="Tan P."/>
            <person name="Nandi T."/>
            <person name="Crabtree J."/>
            <person name="Badger J."/>
            <person name="Beckstrom-Sternberg S."/>
            <person name="Saqib M."/>
            <person name="Schutzer S.E."/>
            <person name="Keim P."/>
            <person name="Nierman W.C."/>
        </authorList>
    </citation>
    <scope>NUCLEOTIDE SEQUENCE [LARGE SCALE GENOMIC DNA]</scope>
    <source>
        <strain>SAVP1</strain>
    </source>
</reference>
<gene>
    <name evidence="1" type="primary">leuC</name>
    <name type="ordered locus">BMASAVP1_1641</name>
</gene>
<keyword id="KW-0004">4Fe-4S</keyword>
<keyword id="KW-0028">Amino-acid biosynthesis</keyword>
<keyword id="KW-0100">Branched-chain amino acid biosynthesis</keyword>
<keyword id="KW-0408">Iron</keyword>
<keyword id="KW-0411">Iron-sulfur</keyword>
<keyword id="KW-0432">Leucine biosynthesis</keyword>
<keyword id="KW-0456">Lyase</keyword>
<keyword id="KW-0479">Metal-binding</keyword>
<comment type="function">
    <text evidence="1">Catalyzes the isomerization between 2-isopropylmalate and 3-isopropylmalate, via the formation of 2-isopropylmaleate.</text>
</comment>
<comment type="catalytic activity">
    <reaction evidence="1">
        <text>(2R,3S)-3-isopropylmalate = (2S)-2-isopropylmalate</text>
        <dbReference type="Rhea" id="RHEA:32287"/>
        <dbReference type="ChEBI" id="CHEBI:1178"/>
        <dbReference type="ChEBI" id="CHEBI:35121"/>
        <dbReference type="EC" id="4.2.1.33"/>
    </reaction>
</comment>
<comment type="cofactor">
    <cofactor evidence="1">
        <name>[4Fe-4S] cluster</name>
        <dbReference type="ChEBI" id="CHEBI:49883"/>
    </cofactor>
    <text evidence="1">Binds 1 [4Fe-4S] cluster per subunit.</text>
</comment>
<comment type="pathway">
    <text evidence="1">Amino-acid biosynthesis; L-leucine biosynthesis; L-leucine from 3-methyl-2-oxobutanoate: step 2/4.</text>
</comment>
<comment type="subunit">
    <text evidence="1">Heterodimer of LeuC and LeuD.</text>
</comment>
<comment type="similarity">
    <text evidence="1">Belongs to the aconitase/IPM isomerase family. LeuC type 1 subfamily.</text>
</comment>
<evidence type="ECO:0000255" key="1">
    <source>
        <dbReference type="HAMAP-Rule" id="MF_01026"/>
    </source>
</evidence>